<protein>
    <recommendedName>
        <fullName evidence="1">Large ribosomal subunit protein uL16c</fullName>
    </recommendedName>
    <alternativeName>
        <fullName evidence="3">50S ribosomal protein L16, chloroplastic</fullName>
    </alternativeName>
</protein>
<organism>
    <name type="scientific">Staurastrum punctulatum</name>
    <name type="common">Green alga</name>
    <name type="synonym">Cosmoastrum punctulatum</name>
    <dbReference type="NCBI Taxonomy" id="102822"/>
    <lineage>
        <taxon>Eukaryota</taxon>
        <taxon>Viridiplantae</taxon>
        <taxon>Streptophyta</taxon>
        <taxon>Zygnematophyceae</taxon>
        <taxon>Zygnematophycidae</taxon>
        <taxon>Desmidiales</taxon>
        <taxon>Desmidiaceae</taxon>
        <taxon>Staurastrum</taxon>
    </lineage>
</organism>
<dbReference type="EMBL" id="AY958085">
    <property type="protein sequence ID" value="AAX45738.1"/>
    <property type="molecule type" value="Genomic_DNA"/>
</dbReference>
<dbReference type="RefSeq" id="YP_636423.1">
    <property type="nucleotide sequence ID" value="NC_008116.1"/>
</dbReference>
<dbReference type="SMR" id="Q32RV3"/>
<dbReference type="GeneID" id="4108601"/>
<dbReference type="GO" id="GO:0009507">
    <property type="term" value="C:chloroplast"/>
    <property type="evidence" value="ECO:0007669"/>
    <property type="project" value="UniProtKB-SubCell"/>
</dbReference>
<dbReference type="GO" id="GO:0005762">
    <property type="term" value="C:mitochondrial large ribosomal subunit"/>
    <property type="evidence" value="ECO:0007669"/>
    <property type="project" value="TreeGrafter"/>
</dbReference>
<dbReference type="GO" id="GO:0019843">
    <property type="term" value="F:rRNA binding"/>
    <property type="evidence" value="ECO:0007669"/>
    <property type="project" value="InterPro"/>
</dbReference>
<dbReference type="GO" id="GO:0003735">
    <property type="term" value="F:structural constituent of ribosome"/>
    <property type="evidence" value="ECO:0007669"/>
    <property type="project" value="InterPro"/>
</dbReference>
<dbReference type="GO" id="GO:0032543">
    <property type="term" value="P:mitochondrial translation"/>
    <property type="evidence" value="ECO:0007669"/>
    <property type="project" value="TreeGrafter"/>
</dbReference>
<dbReference type="CDD" id="cd01433">
    <property type="entry name" value="Ribosomal_L16_L10e"/>
    <property type="match status" value="1"/>
</dbReference>
<dbReference type="FunFam" id="3.90.1170.10:FF:000001">
    <property type="entry name" value="50S ribosomal protein L16"/>
    <property type="match status" value="1"/>
</dbReference>
<dbReference type="Gene3D" id="3.90.1170.10">
    <property type="entry name" value="Ribosomal protein L10e/L16"/>
    <property type="match status" value="1"/>
</dbReference>
<dbReference type="HAMAP" id="MF_01342">
    <property type="entry name" value="Ribosomal_uL16"/>
    <property type="match status" value="1"/>
</dbReference>
<dbReference type="InterPro" id="IPR047873">
    <property type="entry name" value="Ribosomal_uL16"/>
</dbReference>
<dbReference type="InterPro" id="IPR000114">
    <property type="entry name" value="Ribosomal_uL16_bact-type"/>
</dbReference>
<dbReference type="InterPro" id="IPR020798">
    <property type="entry name" value="Ribosomal_uL16_CS"/>
</dbReference>
<dbReference type="InterPro" id="IPR016180">
    <property type="entry name" value="Ribosomal_uL16_dom"/>
</dbReference>
<dbReference type="InterPro" id="IPR036920">
    <property type="entry name" value="Ribosomal_uL16_sf"/>
</dbReference>
<dbReference type="NCBIfam" id="TIGR01164">
    <property type="entry name" value="rplP_bact"/>
    <property type="match status" value="1"/>
</dbReference>
<dbReference type="PANTHER" id="PTHR12220">
    <property type="entry name" value="50S/60S RIBOSOMAL PROTEIN L16"/>
    <property type="match status" value="1"/>
</dbReference>
<dbReference type="PANTHER" id="PTHR12220:SF13">
    <property type="entry name" value="LARGE RIBOSOMAL SUBUNIT PROTEIN UL16M"/>
    <property type="match status" value="1"/>
</dbReference>
<dbReference type="Pfam" id="PF00252">
    <property type="entry name" value="Ribosomal_L16"/>
    <property type="match status" value="1"/>
</dbReference>
<dbReference type="PRINTS" id="PR00060">
    <property type="entry name" value="RIBOSOMALL16"/>
</dbReference>
<dbReference type="SUPFAM" id="SSF54686">
    <property type="entry name" value="Ribosomal protein L16p/L10e"/>
    <property type="match status" value="1"/>
</dbReference>
<dbReference type="PROSITE" id="PS00586">
    <property type="entry name" value="RIBOSOMAL_L16_1"/>
    <property type="match status" value="1"/>
</dbReference>
<dbReference type="PROSITE" id="PS00701">
    <property type="entry name" value="RIBOSOMAL_L16_2"/>
    <property type="match status" value="1"/>
</dbReference>
<name>RK16_STAPU</name>
<keyword id="KW-0150">Chloroplast</keyword>
<keyword id="KW-0934">Plastid</keyword>
<keyword id="KW-0687">Ribonucleoprotein</keyword>
<keyword id="KW-0689">Ribosomal protein</keyword>
<geneLocation type="chloroplast"/>
<sequence length="141" mass="16024">MLSPRRTKYRKQHRGRLKGTATRGNRICFGRFALQALEPSWITSRQIEAGRRAMTRYARRGGKLWIRIFPDKSITMRPAETRMGSGKGAPEYWVAVVKPGRILYEMSGVSETVARSAMKIASYKMPIKTQFLVASKDSITV</sequence>
<comment type="subunit">
    <text evidence="1">Part of the 50S ribosomal subunit.</text>
</comment>
<comment type="subcellular location">
    <subcellularLocation>
        <location>Plastid</location>
        <location>Chloroplast</location>
    </subcellularLocation>
</comment>
<comment type="similarity">
    <text evidence="1">Belongs to the universal ribosomal protein uL16 family.</text>
</comment>
<feature type="chain" id="PRO_0000062316" description="Large ribosomal subunit protein uL16c">
    <location>
        <begin position="1"/>
        <end position="141"/>
    </location>
</feature>
<feature type="region of interest" description="Disordered" evidence="2">
    <location>
        <begin position="1"/>
        <end position="20"/>
    </location>
</feature>
<feature type="compositionally biased region" description="Basic residues" evidence="2">
    <location>
        <begin position="1"/>
        <end position="17"/>
    </location>
</feature>
<evidence type="ECO:0000255" key="1">
    <source>
        <dbReference type="HAMAP-Rule" id="MF_01342"/>
    </source>
</evidence>
<evidence type="ECO:0000256" key="2">
    <source>
        <dbReference type="SAM" id="MobiDB-lite"/>
    </source>
</evidence>
<evidence type="ECO:0000305" key="3"/>
<reference key="1">
    <citation type="journal article" date="2005" name="BMC Biol.">
        <title>The complete chloroplast DNA sequences of the charophycean green algae Staurastrum and Zygnema reveal that the chloroplast genome underwent extensive changes during the evolution of the Zygnematales.</title>
        <authorList>
            <person name="Turmel M."/>
            <person name="Otis C."/>
            <person name="Lemieux C."/>
        </authorList>
    </citation>
    <scope>NUCLEOTIDE SEQUENCE [LARGE SCALE GENOMIC DNA]</scope>
</reference>
<gene>
    <name evidence="1" type="primary">rpl16</name>
</gene>
<proteinExistence type="inferred from homology"/>
<accession>Q32RV3</accession>